<protein>
    <recommendedName>
        <fullName evidence="1">Penicillin-insensitive murein endopeptidase</fullName>
        <ecNumber evidence="1">3.4.24.-</ecNumber>
    </recommendedName>
    <alternativeName>
        <fullName evidence="1">D-alanyl-D-alanine-endopeptidase</fullName>
        <shortName evidence="1">DD-endopeptidase</shortName>
    </alternativeName>
</protein>
<evidence type="ECO:0000255" key="1">
    <source>
        <dbReference type="HAMAP-Rule" id="MF_01623"/>
    </source>
</evidence>
<evidence type="ECO:0000256" key="2">
    <source>
        <dbReference type="SAM" id="MobiDB-lite"/>
    </source>
</evidence>
<sequence>MNKTAIALLALLASSASLAATPWQKITQPVPGSAQSIGSFSNGCIVGADTLPIQSEHYQVMRTDQRRYFGHPDLVMFIQRLSSQVSNLGMGTVLIGDMGMPAGGRFNGGHASHQTGLDVDIFLQLPKTRWTSAQLLRPQALDLVSRDGKHVVSTLWKPEIFSLIKLAAQDKDVTRIFVNPAIKQQLCLDAGTDRDWLRKVRPWFQHRAHMHVRLRCPADSLECEDQPLPPPGDGCGAELQSWFEPPKPGTTKPEKKTPPPLPPSCQALLDEHVI</sequence>
<dbReference type="EC" id="3.4.24.-" evidence="1"/>
<dbReference type="EMBL" id="CU928160">
    <property type="protein sequence ID" value="CAQ99247.1"/>
    <property type="molecule type" value="Genomic_DNA"/>
</dbReference>
<dbReference type="RefSeq" id="WP_001043821.1">
    <property type="nucleotide sequence ID" value="NC_011741.1"/>
</dbReference>
<dbReference type="SMR" id="B7M6K9"/>
<dbReference type="MEROPS" id="M74.001"/>
<dbReference type="GeneID" id="75202589"/>
<dbReference type="KEGG" id="ecr:ECIAI1_2405"/>
<dbReference type="HOGENOM" id="CLU_052496_0_0_6"/>
<dbReference type="GO" id="GO:0030288">
    <property type="term" value="C:outer membrane-bounded periplasmic space"/>
    <property type="evidence" value="ECO:0007669"/>
    <property type="project" value="InterPro"/>
</dbReference>
<dbReference type="GO" id="GO:0046872">
    <property type="term" value="F:metal ion binding"/>
    <property type="evidence" value="ECO:0007669"/>
    <property type="project" value="UniProtKB-KW"/>
</dbReference>
<dbReference type="GO" id="GO:0004222">
    <property type="term" value="F:metalloendopeptidase activity"/>
    <property type="evidence" value="ECO:0007669"/>
    <property type="project" value="UniProtKB-UniRule"/>
</dbReference>
<dbReference type="GO" id="GO:0004252">
    <property type="term" value="F:serine-type endopeptidase activity"/>
    <property type="evidence" value="ECO:0007669"/>
    <property type="project" value="InterPro"/>
</dbReference>
<dbReference type="GO" id="GO:0000270">
    <property type="term" value="P:peptidoglycan metabolic process"/>
    <property type="evidence" value="ECO:0007669"/>
    <property type="project" value="UniProtKB-UniRule"/>
</dbReference>
<dbReference type="GO" id="GO:0006508">
    <property type="term" value="P:proteolysis"/>
    <property type="evidence" value="ECO:0007669"/>
    <property type="project" value="UniProtKB-KW"/>
</dbReference>
<dbReference type="FunFam" id="3.30.1380.10:FF:000002">
    <property type="entry name" value="Penicillin-insensitive murein endopeptidase"/>
    <property type="match status" value="1"/>
</dbReference>
<dbReference type="Gene3D" id="3.30.1380.10">
    <property type="match status" value="1"/>
</dbReference>
<dbReference type="HAMAP" id="MF_01623">
    <property type="entry name" value="MepA"/>
    <property type="match status" value="1"/>
</dbReference>
<dbReference type="InterPro" id="IPR009045">
    <property type="entry name" value="Hedgehog_sig/DD-Pept_Zn-bd_sf"/>
</dbReference>
<dbReference type="InterPro" id="IPR005073">
    <property type="entry name" value="Peptidase_M74"/>
</dbReference>
<dbReference type="NCBIfam" id="NF006947">
    <property type="entry name" value="PRK09429.1"/>
    <property type="match status" value="1"/>
</dbReference>
<dbReference type="Pfam" id="PF03411">
    <property type="entry name" value="Peptidase_M74"/>
    <property type="match status" value="1"/>
</dbReference>
<dbReference type="PIRSF" id="PIRSF018455">
    <property type="entry name" value="MepA"/>
    <property type="match status" value="1"/>
</dbReference>
<dbReference type="SUPFAM" id="SSF55166">
    <property type="entry name" value="Hedgehog/DD-peptidase"/>
    <property type="match status" value="1"/>
</dbReference>
<accession>B7M6K9</accession>
<comment type="function">
    <text evidence="1">Murein endopeptidase that cleaves the D-alanyl-meso-2,6-diamino-pimelyl amide bond that connects peptidoglycan strands. Likely plays a role in the removal of murein from the sacculus.</text>
</comment>
<comment type="cofactor">
    <cofactor evidence="1">
        <name>Zn(2+)</name>
        <dbReference type="ChEBI" id="CHEBI:29105"/>
    </cofactor>
    <text evidence="1">Binds 2 Zn(2+) ions per subunit. Zn(2+) ion 1 is bound in the active site. Zn(2+) ion 2 is bound at the dimer interface by residues from both subunits.</text>
</comment>
<comment type="subunit">
    <text evidence="1">Dimer.</text>
</comment>
<comment type="subcellular location">
    <subcellularLocation>
        <location evidence="1">Periplasm</location>
    </subcellularLocation>
</comment>
<comment type="similarity">
    <text evidence="1">Belongs to the peptidase M74 family.</text>
</comment>
<reference key="1">
    <citation type="journal article" date="2009" name="PLoS Genet.">
        <title>Organised genome dynamics in the Escherichia coli species results in highly diverse adaptive paths.</title>
        <authorList>
            <person name="Touchon M."/>
            <person name="Hoede C."/>
            <person name="Tenaillon O."/>
            <person name="Barbe V."/>
            <person name="Baeriswyl S."/>
            <person name="Bidet P."/>
            <person name="Bingen E."/>
            <person name="Bonacorsi S."/>
            <person name="Bouchier C."/>
            <person name="Bouvet O."/>
            <person name="Calteau A."/>
            <person name="Chiapello H."/>
            <person name="Clermont O."/>
            <person name="Cruveiller S."/>
            <person name="Danchin A."/>
            <person name="Diard M."/>
            <person name="Dossat C."/>
            <person name="Karoui M.E."/>
            <person name="Frapy E."/>
            <person name="Garry L."/>
            <person name="Ghigo J.M."/>
            <person name="Gilles A.M."/>
            <person name="Johnson J."/>
            <person name="Le Bouguenec C."/>
            <person name="Lescat M."/>
            <person name="Mangenot S."/>
            <person name="Martinez-Jehanne V."/>
            <person name="Matic I."/>
            <person name="Nassif X."/>
            <person name="Oztas S."/>
            <person name="Petit M.A."/>
            <person name="Pichon C."/>
            <person name="Rouy Z."/>
            <person name="Ruf C.S."/>
            <person name="Schneider D."/>
            <person name="Tourret J."/>
            <person name="Vacherie B."/>
            <person name="Vallenet D."/>
            <person name="Medigue C."/>
            <person name="Rocha E.P.C."/>
            <person name="Denamur E."/>
        </authorList>
    </citation>
    <scope>NUCLEOTIDE SEQUENCE [LARGE SCALE GENOMIC DNA]</scope>
    <source>
        <strain>IAI1</strain>
    </source>
</reference>
<proteinExistence type="inferred from homology"/>
<name>MEPA_ECO8A</name>
<organism>
    <name type="scientific">Escherichia coli O8 (strain IAI1)</name>
    <dbReference type="NCBI Taxonomy" id="585034"/>
    <lineage>
        <taxon>Bacteria</taxon>
        <taxon>Pseudomonadati</taxon>
        <taxon>Pseudomonadota</taxon>
        <taxon>Gammaproteobacteria</taxon>
        <taxon>Enterobacterales</taxon>
        <taxon>Enterobacteriaceae</taxon>
        <taxon>Escherichia</taxon>
    </lineage>
</organism>
<keyword id="KW-1015">Disulfide bond</keyword>
<keyword id="KW-0378">Hydrolase</keyword>
<keyword id="KW-0479">Metal-binding</keyword>
<keyword id="KW-0482">Metalloprotease</keyword>
<keyword id="KW-0574">Periplasm</keyword>
<keyword id="KW-0645">Protease</keyword>
<keyword id="KW-0732">Signal</keyword>
<keyword id="KW-0862">Zinc</keyword>
<gene>
    <name evidence="1" type="primary">mepA</name>
    <name type="ordered locus">ECIAI1_2405</name>
</gene>
<feature type="signal peptide" evidence="1">
    <location>
        <begin position="1"/>
        <end position="19"/>
    </location>
</feature>
<feature type="chain" id="PRO_1000186098" description="Penicillin-insensitive murein endopeptidase">
    <location>
        <begin position="20"/>
        <end position="274"/>
    </location>
</feature>
<feature type="region of interest" description="Disordered" evidence="2">
    <location>
        <begin position="227"/>
        <end position="274"/>
    </location>
</feature>
<feature type="binding site" evidence="1">
    <location>
        <position position="110"/>
    </location>
    <ligand>
        <name>Zn(2+)</name>
        <dbReference type="ChEBI" id="CHEBI:29105"/>
        <label>1</label>
    </ligand>
</feature>
<feature type="binding site" evidence="1">
    <location>
        <position position="113"/>
    </location>
    <ligand>
        <name>Zn(2+)</name>
        <dbReference type="ChEBI" id="CHEBI:29105"/>
        <label>1</label>
    </ligand>
</feature>
<feature type="binding site" evidence="1">
    <location>
        <position position="120"/>
    </location>
    <ligand>
        <name>Zn(2+)</name>
        <dbReference type="ChEBI" id="CHEBI:29105"/>
        <label>1</label>
    </ligand>
</feature>
<feature type="binding site" evidence="1">
    <location>
        <position position="147"/>
    </location>
    <ligand>
        <name>Zn(2+)</name>
        <dbReference type="ChEBI" id="CHEBI:29105"/>
        <label>2</label>
    </ligand>
</feature>
<feature type="binding site" evidence="1">
    <location>
        <position position="150"/>
    </location>
    <ligand>
        <name>Zn(2+)</name>
        <dbReference type="ChEBI" id="CHEBI:29105"/>
        <label>2</label>
    </ligand>
</feature>
<feature type="binding site" evidence="1">
    <location>
        <position position="211"/>
    </location>
    <ligand>
        <name>Zn(2+)</name>
        <dbReference type="ChEBI" id="CHEBI:29105"/>
        <label>1</label>
    </ligand>
</feature>
<feature type="disulfide bond" evidence="1">
    <location>
        <begin position="44"/>
        <end position="265"/>
    </location>
</feature>
<feature type="disulfide bond" evidence="1">
    <location>
        <begin position="187"/>
        <end position="235"/>
    </location>
</feature>
<feature type="disulfide bond" evidence="1">
    <location>
        <begin position="216"/>
        <end position="223"/>
    </location>
</feature>